<feature type="chain" id="PRO_0000394690" description="Cytotoxin 10" evidence="4">
    <location>
        <begin position="1"/>
        <end position="60"/>
    </location>
</feature>
<feature type="disulfide bond" evidence="2">
    <location>
        <begin position="3"/>
        <end position="21"/>
    </location>
</feature>
<feature type="disulfide bond" evidence="2">
    <location>
        <begin position="14"/>
        <end position="38"/>
    </location>
</feature>
<feature type="disulfide bond" evidence="2">
    <location>
        <begin position="42"/>
        <end position="53"/>
    </location>
</feature>
<feature type="disulfide bond" evidence="2">
    <location>
        <begin position="54"/>
        <end position="59"/>
    </location>
</feature>
<name>3SAA_NAJNA</name>
<comment type="function">
    <text evidence="1 2 4">Shows cytolytic activity on many different cells by forming pore in lipid membranes. In vivo, increases heart rate or kills the animal by cardiac arrest. In addition, it binds to heparin with high affinity, interacts with Kv channel-interacting protein 1 (KCNIP1) in a calcium-independent manner, and binds to integrin alpha-V/beta-3 (ITGAV/ITGB3) with moderate affinity (By similarity). Has hemolytic activity towards human erythrocytes (EC(50)=0.162 uM) and cytolytic activity towards various cell lines (PubMed:26456928).</text>
</comment>
<comment type="subunit">
    <text evidence="1">Monomer in solution; Homodimer and oligomer in the presence of negatively charged lipids forming a pore with a size ranging between 20 and 30 Angstroms.</text>
</comment>
<comment type="subcellular location">
    <subcellularLocation>
        <location evidence="3 4">Secreted</location>
    </subcellularLocation>
    <subcellularLocation>
        <location evidence="1">Target cell membrane</location>
    </subcellularLocation>
</comment>
<comment type="tissue specificity">
    <text evidence="7">Expressed by the venom gland.</text>
</comment>
<comment type="miscellaneous">
    <text evidence="7">Is classified as a P-type cytotoxin, since a proline residue stands at position 30 (Pro-31 in standard classification).</text>
</comment>
<comment type="similarity">
    <text evidence="7">Belongs to the three-finger toxin family. Short-chain subfamily. Type IA cytotoxin sub-subfamily.</text>
</comment>
<protein>
    <recommendedName>
        <fullName evidence="6">Cytotoxin 10</fullName>
        <shortName evidence="5">CTX10</shortName>
    </recommendedName>
</protein>
<organism evidence="6">
    <name type="scientific">Naja naja</name>
    <name type="common">Indian cobra</name>
    <dbReference type="NCBI Taxonomy" id="35670"/>
    <lineage>
        <taxon>Eukaryota</taxon>
        <taxon>Metazoa</taxon>
        <taxon>Chordata</taxon>
        <taxon>Craniata</taxon>
        <taxon>Vertebrata</taxon>
        <taxon>Euteleostomi</taxon>
        <taxon>Lepidosauria</taxon>
        <taxon>Squamata</taxon>
        <taxon>Bifurcata</taxon>
        <taxon>Unidentata</taxon>
        <taxon>Episquamata</taxon>
        <taxon>Toxicofera</taxon>
        <taxon>Serpentes</taxon>
        <taxon>Colubroidea</taxon>
        <taxon>Elapidae</taxon>
        <taxon>Elapinae</taxon>
        <taxon>Naja</taxon>
    </lineage>
</organism>
<sequence length="60" mass="6764">LKCNKLVPLFYKTCPAGKDLCYKMYMVATPKVPVKRGCIDVCPKSSLLVKYVCCNTDRCN</sequence>
<proteinExistence type="evidence at protein level"/>
<accession>P86541</accession>
<evidence type="ECO:0000250" key="1">
    <source>
        <dbReference type="UniProtKB" id="P60301"/>
    </source>
</evidence>
<evidence type="ECO:0000250" key="2">
    <source>
        <dbReference type="UniProtKB" id="P60304"/>
    </source>
</evidence>
<evidence type="ECO:0000269" key="3">
    <source>
    </source>
</evidence>
<evidence type="ECO:0000269" key="4">
    <source>
    </source>
</evidence>
<evidence type="ECO:0000303" key="5">
    <source>
    </source>
</evidence>
<evidence type="ECO:0000303" key="6">
    <source>
    </source>
</evidence>
<evidence type="ECO:0000305" key="7"/>
<keyword id="KW-0123">Cardiotoxin</keyword>
<keyword id="KW-0204">Cytolysis</keyword>
<keyword id="KW-0903">Direct protein sequencing</keyword>
<keyword id="KW-1015">Disulfide bond</keyword>
<keyword id="KW-0472">Membrane</keyword>
<keyword id="KW-1185">Reference proteome</keyword>
<keyword id="KW-0964">Secreted</keyword>
<keyword id="KW-1052">Target cell membrane</keyword>
<keyword id="KW-1053">Target membrane</keyword>
<keyword id="KW-0800">Toxin</keyword>
<reference key="1">
    <citation type="journal article" date="2016" name="Comp. Biochem. Physiol.">
        <title>Comparison of the primary structures, cytotoxicities, and affinities to phospholipids of five kinds of cytotoxins from the venom of Indian cobra, Naja naja.</title>
        <authorList>
            <person name="Suzuki-Matsubara M."/>
            <person name="Athauda S.B.P."/>
            <person name="Suzuki Y."/>
            <person name="Matsubara R.A.K."/>
            <person name="Moriyama A."/>
        </authorList>
    </citation>
    <scope>PROTEIN SEQUENCE</scope>
    <scope>FUNCTION</scope>
    <scope>SUBCELLULAR LOCATION</scope>
    <source>
        <tissue evidence="6">Venom</tissue>
    </source>
</reference>
<reference key="2">
    <citation type="journal article" date="2010" name="Biomed. Res.">
        <title>Molecular diversity in venom proteins of the Russell's viper (Daboia russellii russellii) and the Indian cobra (Naja naja) in Sri Lanka.</title>
        <authorList>
            <person name="Suzuki M."/>
            <person name="Itoh T."/>
            <person name="Bandaranayake B.M.A.I.K."/>
            <person name="Ranasinghe J.G."/>
            <person name="Athauda S.B."/>
            <person name="Moriyama A."/>
        </authorList>
    </citation>
    <scope>PROTEIN SEQUENCE OF 1-30</scope>
    <scope>SUBCELLULAR LOCATION</scope>
    <source>
        <tissue evidence="5">Venom</tissue>
    </source>
</reference>
<dbReference type="SMR" id="P86541"/>
<dbReference type="Proteomes" id="UP000694559">
    <property type="component" value="Unplaced"/>
</dbReference>
<dbReference type="GO" id="GO:0005576">
    <property type="term" value="C:extracellular region"/>
    <property type="evidence" value="ECO:0007669"/>
    <property type="project" value="UniProtKB-SubCell"/>
</dbReference>
<dbReference type="GO" id="GO:0016020">
    <property type="term" value="C:membrane"/>
    <property type="evidence" value="ECO:0007669"/>
    <property type="project" value="UniProtKB-KW"/>
</dbReference>
<dbReference type="GO" id="GO:0044218">
    <property type="term" value="C:other organism cell membrane"/>
    <property type="evidence" value="ECO:0007669"/>
    <property type="project" value="UniProtKB-KW"/>
</dbReference>
<dbReference type="GO" id="GO:0090729">
    <property type="term" value="F:toxin activity"/>
    <property type="evidence" value="ECO:0007669"/>
    <property type="project" value="UniProtKB-KW"/>
</dbReference>
<dbReference type="GO" id="GO:0031640">
    <property type="term" value="P:killing of cells of another organism"/>
    <property type="evidence" value="ECO:0007669"/>
    <property type="project" value="UniProtKB-KW"/>
</dbReference>
<dbReference type="CDD" id="cd00206">
    <property type="entry name" value="TFP_snake_toxin"/>
    <property type="match status" value="1"/>
</dbReference>
<dbReference type="FunFam" id="2.10.60.10:FF:000024">
    <property type="entry name" value="Cytotoxin 1"/>
    <property type="match status" value="1"/>
</dbReference>
<dbReference type="Gene3D" id="2.10.60.10">
    <property type="entry name" value="CD59"/>
    <property type="match status" value="1"/>
</dbReference>
<dbReference type="InterPro" id="IPR003572">
    <property type="entry name" value="Cytotoxin_Cobra"/>
</dbReference>
<dbReference type="InterPro" id="IPR003571">
    <property type="entry name" value="Snake_3FTx"/>
</dbReference>
<dbReference type="InterPro" id="IPR045860">
    <property type="entry name" value="Snake_toxin-like_sf"/>
</dbReference>
<dbReference type="InterPro" id="IPR018354">
    <property type="entry name" value="Snake_toxin_con_site"/>
</dbReference>
<dbReference type="InterPro" id="IPR054131">
    <property type="entry name" value="Toxin_cobra-type"/>
</dbReference>
<dbReference type="Pfam" id="PF21947">
    <property type="entry name" value="Toxin_cobra-type"/>
    <property type="match status" value="1"/>
</dbReference>
<dbReference type="PRINTS" id="PR00282">
    <property type="entry name" value="CYTOTOXIN"/>
</dbReference>
<dbReference type="SUPFAM" id="SSF57302">
    <property type="entry name" value="Snake toxin-like"/>
    <property type="match status" value="1"/>
</dbReference>
<dbReference type="PROSITE" id="PS00272">
    <property type="entry name" value="SNAKE_TOXIN"/>
    <property type="match status" value="1"/>
</dbReference>